<keyword id="KW-0150">Chloroplast</keyword>
<keyword id="KW-0472">Membrane</keyword>
<keyword id="KW-0602">Photosynthesis</keyword>
<keyword id="KW-0604">Photosystem II</keyword>
<keyword id="KW-0934">Plastid</keyword>
<keyword id="KW-0793">Thylakoid</keyword>
<keyword id="KW-0812">Transmembrane</keyword>
<keyword id="KW-1133">Transmembrane helix</keyword>
<comment type="function">
    <text evidence="1">Found at the monomer-monomer interface of the photosystem II (PS II) dimer, plays a role in assembly and dimerization of PSII. PSII is a light-driven water plastoquinone oxidoreductase, using light energy to abstract electrons from H(2)O, generating a proton gradient subsequently used for ATP formation.</text>
</comment>
<comment type="subunit">
    <text evidence="1">PSII is composed of 1 copy each of membrane proteins PsbA, PsbB, PsbC, PsbD, PsbE, PsbF, PsbH, PsbI, PsbJ, PsbK, PsbL, PsbM, PsbT, PsbY, PsbZ, Psb30/Ycf12, at least 3 peripheral proteins of the oxygen-evolving complex and a large number of cofactors. It forms dimeric complexes.</text>
</comment>
<comment type="subcellular location">
    <subcellularLocation>
        <location evidence="1">Plastid</location>
        <location evidence="1">Chloroplast thylakoid membrane</location>
        <topology evidence="1">Single-pass membrane protein</topology>
    </subcellularLocation>
</comment>
<comment type="similarity">
    <text evidence="1">Belongs to the PsbT family.</text>
</comment>
<gene>
    <name evidence="1" type="primary">psbT</name>
</gene>
<geneLocation type="chloroplast"/>
<sequence>MEALVYTFLLVGTLGIIFFAIFFREPPKITSNKK</sequence>
<proteinExistence type="inferred from homology"/>
<accession>P59904</accession>
<organism>
    <name type="scientific">Klebsormidium bilatum</name>
    <name type="common">Filamentous green alga</name>
    <dbReference type="NCBI Taxonomy" id="201239"/>
    <lineage>
        <taxon>Eukaryota</taxon>
        <taxon>Viridiplantae</taxon>
        <taxon>Streptophyta</taxon>
        <taxon>Klebsormidiophyceae</taxon>
        <taxon>Klebsormidiales</taxon>
        <taxon>Klebsormidiaceae</taxon>
        <taxon>Klebsormidium</taxon>
    </lineage>
</organism>
<evidence type="ECO:0000255" key="1">
    <source>
        <dbReference type="HAMAP-Rule" id="MF_00808"/>
    </source>
</evidence>
<feature type="chain" id="PRO_0000217941" description="Photosystem II reaction center protein T">
    <location>
        <begin position="1"/>
        <end position="34"/>
    </location>
</feature>
<feature type="transmembrane region" description="Helical" evidence="1">
    <location>
        <begin position="3"/>
        <end position="23"/>
    </location>
</feature>
<dbReference type="EMBL" id="AF482500">
    <property type="protein sequence ID" value="AAQ05922.1"/>
    <property type="molecule type" value="Genomic_DNA"/>
</dbReference>
<dbReference type="SMR" id="P59904"/>
<dbReference type="GO" id="GO:0009535">
    <property type="term" value="C:chloroplast thylakoid membrane"/>
    <property type="evidence" value="ECO:0007669"/>
    <property type="project" value="UniProtKB-SubCell"/>
</dbReference>
<dbReference type="GO" id="GO:0009539">
    <property type="term" value="C:photosystem II reaction center"/>
    <property type="evidence" value="ECO:0007669"/>
    <property type="project" value="InterPro"/>
</dbReference>
<dbReference type="GO" id="GO:0015979">
    <property type="term" value="P:photosynthesis"/>
    <property type="evidence" value="ECO:0007669"/>
    <property type="project" value="UniProtKB-UniRule"/>
</dbReference>
<dbReference type="HAMAP" id="MF_00808">
    <property type="entry name" value="PSII_PsbT"/>
    <property type="match status" value="1"/>
</dbReference>
<dbReference type="InterPro" id="IPR001743">
    <property type="entry name" value="PSII_PsbT"/>
</dbReference>
<dbReference type="InterPro" id="IPR037268">
    <property type="entry name" value="PSII_PsbT_sf"/>
</dbReference>
<dbReference type="PANTHER" id="PTHR36411">
    <property type="match status" value="1"/>
</dbReference>
<dbReference type="PANTHER" id="PTHR36411:SF2">
    <property type="entry name" value="PHOTOSYSTEM II REACTION CENTER PROTEIN T"/>
    <property type="match status" value="1"/>
</dbReference>
<dbReference type="Pfam" id="PF01405">
    <property type="entry name" value="PsbT"/>
    <property type="match status" value="1"/>
</dbReference>
<dbReference type="SUPFAM" id="SSF161029">
    <property type="entry name" value="Photosystem II reaction center protein T, PsbT"/>
    <property type="match status" value="1"/>
</dbReference>
<protein>
    <recommendedName>
        <fullName evidence="1">Photosystem II reaction center protein T</fullName>
        <shortName evidence="1">PSII-T</shortName>
    </recommendedName>
</protein>
<reference key="1">
    <citation type="submission" date="2002-02" db="EMBL/GenBank/DDBJ databases">
        <title>psbB gene cluster in Charophyceae.</title>
        <authorList>
            <person name="Lee J."/>
            <person name="Manhart J.R."/>
        </authorList>
    </citation>
    <scope>NUCLEOTIDE SEQUENCE [GENOMIC DNA]</scope>
</reference>
<name>PSBT_KLEBI</name>